<evidence type="ECO:0000255" key="1">
    <source>
        <dbReference type="HAMAP-Rule" id="MF_00023"/>
    </source>
</evidence>
<reference key="1">
    <citation type="journal article" date="2005" name="Proc. Natl. Acad. Sci. U.S.A.">
        <title>The genome of the heartwater agent Ehrlichia ruminantium contains multiple tandem repeats of actively variable copy number.</title>
        <authorList>
            <person name="Collins N.E."/>
            <person name="Liebenberg J."/>
            <person name="de Villiers E.P."/>
            <person name="Brayton K.A."/>
            <person name="Louw E."/>
            <person name="Pretorius A."/>
            <person name="Faber F.E."/>
            <person name="van Heerden H."/>
            <person name="Josemans A."/>
            <person name="van Kleef M."/>
            <person name="Steyn H.C."/>
            <person name="van Strijp M.F."/>
            <person name="Zweygarth E."/>
            <person name="Jongejan F."/>
            <person name="Maillard J.C."/>
            <person name="Berthier D."/>
            <person name="Botha M."/>
            <person name="Joubert F."/>
            <person name="Corton C.H."/>
            <person name="Thomson N.R."/>
            <person name="Allsopp M.T."/>
            <person name="Allsopp B.A."/>
        </authorList>
    </citation>
    <scope>NUCLEOTIDE SEQUENCE [LARGE SCALE GENOMIC DNA]</scope>
    <source>
        <strain>Welgevonden</strain>
    </source>
</reference>
<reference key="2">
    <citation type="journal article" date="2006" name="J. Bacteriol.">
        <title>Comparative genomic analysis of three strains of Ehrlichia ruminantium reveals an active process of genome size plasticity.</title>
        <authorList>
            <person name="Frutos R."/>
            <person name="Viari A."/>
            <person name="Ferraz C."/>
            <person name="Morgat A."/>
            <person name="Eychenie S."/>
            <person name="Kandassamy Y."/>
            <person name="Chantal I."/>
            <person name="Bensaid A."/>
            <person name="Coissac E."/>
            <person name="Vachiery N."/>
            <person name="Demaille J."/>
            <person name="Martinez D."/>
        </authorList>
    </citation>
    <scope>NUCLEOTIDE SEQUENCE [LARGE SCALE GENOMIC DNA]</scope>
    <source>
        <strain>Welgevonden</strain>
    </source>
</reference>
<protein>
    <recommendedName>
        <fullName evidence="1">SsrA-binding protein</fullName>
    </recommendedName>
    <alternativeName>
        <fullName evidence="1">Small protein B</fullName>
    </alternativeName>
</protein>
<sequence>MDIIIENRKVRFNYFIIQEFDAGIVLIGSEVKSLRQRKVSIAESYVTERNMELWLCNLHISEYTQANTKNHNPTRPRKLLLKKKQIYKISGNMKNDGFTVVPLFLYFNDKGIAKAKIVIVKGKKLHDKRETIKARDWNREKSRILRGG</sequence>
<proteinExistence type="inferred from homology"/>
<name>SSRP_EHRRW</name>
<gene>
    <name evidence="1" type="primary">smpB</name>
    <name type="ordered locus">Erum0790</name>
    <name type="ordered locus">ERWE_CDS_00740</name>
</gene>
<feature type="chain" id="PRO_1000002052" description="SsrA-binding protein">
    <location>
        <begin position="1"/>
        <end position="148"/>
    </location>
</feature>
<dbReference type="EMBL" id="CR767821">
    <property type="protein sequence ID" value="CAH57793.1"/>
    <property type="molecule type" value="Genomic_DNA"/>
</dbReference>
<dbReference type="EMBL" id="CR925678">
    <property type="protein sequence ID" value="CAI26568.1"/>
    <property type="molecule type" value="Genomic_DNA"/>
</dbReference>
<dbReference type="RefSeq" id="WP_011154762.1">
    <property type="nucleotide sequence ID" value="NC_005295.2"/>
</dbReference>
<dbReference type="SMR" id="Q5HC98"/>
<dbReference type="GeneID" id="33057794"/>
<dbReference type="KEGG" id="eru:Erum0790"/>
<dbReference type="KEGG" id="erw:ERWE_CDS_00740"/>
<dbReference type="eggNOG" id="COG0691">
    <property type="taxonomic scope" value="Bacteria"/>
</dbReference>
<dbReference type="HOGENOM" id="CLU_108953_0_1_5"/>
<dbReference type="Proteomes" id="UP000001021">
    <property type="component" value="Chromosome"/>
</dbReference>
<dbReference type="GO" id="GO:0005829">
    <property type="term" value="C:cytosol"/>
    <property type="evidence" value="ECO:0007669"/>
    <property type="project" value="TreeGrafter"/>
</dbReference>
<dbReference type="GO" id="GO:0003723">
    <property type="term" value="F:RNA binding"/>
    <property type="evidence" value="ECO:0007669"/>
    <property type="project" value="UniProtKB-UniRule"/>
</dbReference>
<dbReference type="GO" id="GO:0070929">
    <property type="term" value="P:trans-translation"/>
    <property type="evidence" value="ECO:0007669"/>
    <property type="project" value="UniProtKB-UniRule"/>
</dbReference>
<dbReference type="CDD" id="cd09294">
    <property type="entry name" value="SmpB"/>
    <property type="match status" value="1"/>
</dbReference>
<dbReference type="Gene3D" id="2.40.280.10">
    <property type="match status" value="1"/>
</dbReference>
<dbReference type="HAMAP" id="MF_00023">
    <property type="entry name" value="SmpB"/>
    <property type="match status" value="1"/>
</dbReference>
<dbReference type="InterPro" id="IPR023620">
    <property type="entry name" value="SmpB"/>
</dbReference>
<dbReference type="InterPro" id="IPR000037">
    <property type="entry name" value="SsrA-bd_prot"/>
</dbReference>
<dbReference type="InterPro" id="IPR020081">
    <property type="entry name" value="SsrA-bd_prot_CS"/>
</dbReference>
<dbReference type="NCBIfam" id="NF003843">
    <property type="entry name" value="PRK05422.1"/>
    <property type="match status" value="1"/>
</dbReference>
<dbReference type="NCBIfam" id="TIGR00086">
    <property type="entry name" value="smpB"/>
    <property type="match status" value="1"/>
</dbReference>
<dbReference type="PANTHER" id="PTHR30308:SF2">
    <property type="entry name" value="SSRA-BINDING PROTEIN"/>
    <property type="match status" value="1"/>
</dbReference>
<dbReference type="PANTHER" id="PTHR30308">
    <property type="entry name" value="TMRNA-BINDING COMPONENT OF TRANS-TRANSLATION TAGGING COMPLEX"/>
    <property type="match status" value="1"/>
</dbReference>
<dbReference type="Pfam" id="PF01668">
    <property type="entry name" value="SmpB"/>
    <property type="match status" value="1"/>
</dbReference>
<dbReference type="SUPFAM" id="SSF74982">
    <property type="entry name" value="Small protein B (SmpB)"/>
    <property type="match status" value="1"/>
</dbReference>
<dbReference type="PROSITE" id="PS01317">
    <property type="entry name" value="SSRP"/>
    <property type="match status" value="1"/>
</dbReference>
<organism>
    <name type="scientific">Ehrlichia ruminantium (strain Welgevonden)</name>
    <dbReference type="NCBI Taxonomy" id="254945"/>
    <lineage>
        <taxon>Bacteria</taxon>
        <taxon>Pseudomonadati</taxon>
        <taxon>Pseudomonadota</taxon>
        <taxon>Alphaproteobacteria</taxon>
        <taxon>Rickettsiales</taxon>
        <taxon>Anaplasmataceae</taxon>
        <taxon>Ehrlichia</taxon>
    </lineage>
</organism>
<comment type="function">
    <text evidence="1">Required for rescue of stalled ribosomes mediated by trans-translation. Binds to transfer-messenger RNA (tmRNA), required for stable association of tmRNA with ribosomes. tmRNA and SmpB together mimic tRNA shape, replacing the anticodon stem-loop with SmpB. tmRNA is encoded by the ssrA gene; the 2 termini fold to resemble tRNA(Ala) and it encodes a 'tag peptide', a short internal open reading frame. During trans-translation Ala-aminoacylated tmRNA acts like a tRNA, entering the A-site of stalled ribosomes, displacing the stalled mRNA. The ribosome then switches to translate the ORF on the tmRNA; the nascent peptide is terminated with the 'tag peptide' encoded by the tmRNA and targeted for degradation. The ribosome is freed to recommence translation, which seems to be the essential function of trans-translation.</text>
</comment>
<comment type="subcellular location">
    <subcellularLocation>
        <location evidence="1">Cytoplasm</location>
    </subcellularLocation>
    <text evidence="1">The tmRNA-SmpB complex associates with stalled 70S ribosomes.</text>
</comment>
<comment type="similarity">
    <text evidence="1">Belongs to the SmpB family.</text>
</comment>
<accession>Q5HC98</accession>
<accession>Q5FCN5</accession>
<keyword id="KW-0963">Cytoplasm</keyword>
<keyword id="KW-0694">RNA-binding</keyword>